<comment type="function">
    <text evidence="2">Catalyzes the formation of N(7)-methylguanine at position 46 (m7G46) in tRNA.</text>
</comment>
<comment type="catalytic activity">
    <reaction evidence="2">
        <text>guanosine(46) in tRNA + S-adenosyl-L-methionine = N(7)-methylguanosine(46) in tRNA + S-adenosyl-L-homocysteine</text>
        <dbReference type="Rhea" id="RHEA:42708"/>
        <dbReference type="Rhea" id="RHEA-COMP:10188"/>
        <dbReference type="Rhea" id="RHEA-COMP:10189"/>
        <dbReference type="ChEBI" id="CHEBI:57856"/>
        <dbReference type="ChEBI" id="CHEBI:59789"/>
        <dbReference type="ChEBI" id="CHEBI:74269"/>
        <dbReference type="ChEBI" id="CHEBI:74480"/>
        <dbReference type="EC" id="2.1.1.33"/>
    </reaction>
</comment>
<comment type="pathway">
    <text evidence="2">tRNA modification; N(7)-methylguanine-tRNA biosynthesis.</text>
</comment>
<comment type="similarity">
    <text evidence="2">Belongs to the class I-like SAM-binding methyltransferase superfamily. TrmB family.</text>
</comment>
<evidence type="ECO:0000250" key="1"/>
<evidence type="ECO:0000255" key="2">
    <source>
        <dbReference type="HAMAP-Rule" id="MF_01057"/>
    </source>
</evidence>
<evidence type="ECO:0000256" key="3">
    <source>
        <dbReference type="SAM" id="MobiDB-lite"/>
    </source>
</evidence>
<organism>
    <name type="scientific">Paracoccus denitrificans (strain Pd 1222)</name>
    <dbReference type="NCBI Taxonomy" id="318586"/>
    <lineage>
        <taxon>Bacteria</taxon>
        <taxon>Pseudomonadati</taxon>
        <taxon>Pseudomonadota</taxon>
        <taxon>Alphaproteobacteria</taxon>
        <taxon>Rhodobacterales</taxon>
        <taxon>Paracoccaceae</taxon>
        <taxon>Paracoccus</taxon>
    </lineage>
</organism>
<feature type="chain" id="PRO_0000288194" description="tRNA (guanine-N(7)-)-methyltransferase">
    <location>
        <begin position="1"/>
        <end position="233"/>
    </location>
</feature>
<feature type="region of interest" description="Disordered" evidence="3">
    <location>
        <begin position="1"/>
        <end position="36"/>
    </location>
</feature>
<feature type="active site" evidence="1">
    <location>
        <position position="142"/>
    </location>
</feature>
<feature type="binding site" evidence="2">
    <location>
        <position position="68"/>
    </location>
    <ligand>
        <name>S-adenosyl-L-methionine</name>
        <dbReference type="ChEBI" id="CHEBI:59789"/>
    </ligand>
</feature>
<feature type="binding site" evidence="2">
    <location>
        <position position="93"/>
    </location>
    <ligand>
        <name>S-adenosyl-L-methionine</name>
        <dbReference type="ChEBI" id="CHEBI:59789"/>
    </ligand>
</feature>
<feature type="binding site" evidence="2">
    <location>
        <position position="120"/>
    </location>
    <ligand>
        <name>S-adenosyl-L-methionine</name>
        <dbReference type="ChEBI" id="CHEBI:59789"/>
    </ligand>
</feature>
<feature type="binding site" evidence="2">
    <location>
        <position position="142"/>
    </location>
    <ligand>
        <name>S-adenosyl-L-methionine</name>
        <dbReference type="ChEBI" id="CHEBI:59789"/>
    </ligand>
</feature>
<feature type="binding site" evidence="2">
    <location>
        <position position="146"/>
    </location>
    <ligand>
        <name>substrate</name>
    </ligand>
</feature>
<feature type="binding site" evidence="2">
    <location>
        <position position="178"/>
    </location>
    <ligand>
        <name>substrate</name>
    </ligand>
</feature>
<feature type="binding site" evidence="2">
    <location>
        <begin position="211"/>
        <end position="214"/>
    </location>
    <ligand>
        <name>substrate</name>
    </ligand>
</feature>
<proteinExistence type="inferred from homology"/>
<accession>A1B475</accession>
<reference key="1">
    <citation type="submission" date="2006-12" db="EMBL/GenBank/DDBJ databases">
        <title>Complete sequence of chromosome 1 of Paracoccus denitrificans PD1222.</title>
        <authorList>
            <person name="Copeland A."/>
            <person name="Lucas S."/>
            <person name="Lapidus A."/>
            <person name="Barry K."/>
            <person name="Detter J.C."/>
            <person name="Glavina del Rio T."/>
            <person name="Hammon N."/>
            <person name="Israni S."/>
            <person name="Dalin E."/>
            <person name="Tice H."/>
            <person name="Pitluck S."/>
            <person name="Munk A.C."/>
            <person name="Brettin T."/>
            <person name="Bruce D."/>
            <person name="Han C."/>
            <person name="Tapia R."/>
            <person name="Gilna P."/>
            <person name="Schmutz J."/>
            <person name="Larimer F."/>
            <person name="Land M."/>
            <person name="Hauser L."/>
            <person name="Kyrpides N."/>
            <person name="Lykidis A."/>
            <person name="Spiro S."/>
            <person name="Richardson D.J."/>
            <person name="Moir J.W.B."/>
            <person name="Ferguson S.J."/>
            <person name="van Spanning R.J.M."/>
            <person name="Richardson P."/>
        </authorList>
    </citation>
    <scope>NUCLEOTIDE SEQUENCE [LARGE SCALE GENOMIC DNA]</scope>
    <source>
        <strain>Pd 1222</strain>
    </source>
</reference>
<sequence>MSEFDPNPPRRNFYGRRHGKTLRQSQKGYLSEDLGSLRPRGITVQENPERKPVAPSTIFGDDRPVWLEVGFGGGEHMVHMAARYPEIGIIGCEPFINGVAMLLGKIRAAGVENVSVHPGDARDLMDVLPDASIDKAFLNYPDPWPKARHHRRRFVTPEHLIPLARVMKPGAEFRVATDIPDYVRQTLEEVPQAGFDLVAEGPQAWEDWPSTRYEQKALREGRVPHYVTFRRRS</sequence>
<keyword id="KW-0489">Methyltransferase</keyword>
<keyword id="KW-1185">Reference proteome</keyword>
<keyword id="KW-0949">S-adenosyl-L-methionine</keyword>
<keyword id="KW-0808">Transferase</keyword>
<keyword id="KW-0819">tRNA processing</keyword>
<gene>
    <name evidence="2" type="primary">trmB</name>
    <name type="ordered locus">Pden_2227</name>
</gene>
<dbReference type="EC" id="2.1.1.33" evidence="2"/>
<dbReference type="EMBL" id="CP000489">
    <property type="protein sequence ID" value="ABL70319.1"/>
    <property type="molecule type" value="Genomic_DNA"/>
</dbReference>
<dbReference type="RefSeq" id="WP_011748514.1">
    <property type="nucleotide sequence ID" value="NC_008686.1"/>
</dbReference>
<dbReference type="SMR" id="A1B475"/>
<dbReference type="STRING" id="318586.Pden_2227"/>
<dbReference type="EnsemblBacteria" id="ABL70319">
    <property type="protein sequence ID" value="ABL70319"/>
    <property type="gene ID" value="Pden_2227"/>
</dbReference>
<dbReference type="GeneID" id="93450625"/>
<dbReference type="KEGG" id="pde:Pden_2227"/>
<dbReference type="eggNOG" id="COG0220">
    <property type="taxonomic scope" value="Bacteria"/>
</dbReference>
<dbReference type="HOGENOM" id="CLU_050910_0_3_5"/>
<dbReference type="OrthoDB" id="9802090at2"/>
<dbReference type="UniPathway" id="UPA00989"/>
<dbReference type="Proteomes" id="UP000000361">
    <property type="component" value="Chromosome 1"/>
</dbReference>
<dbReference type="GO" id="GO:0043527">
    <property type="term" value="C:tRNA methyltransferase complex"/>
    <property type="evidence" value="ECO:0007669"/>
    <property type="project" value="TreeGrafter"/>
</dbReference>
<dbReference type="GO" id="GO:0008176">
    <property type="term" value="F:tRNA (guanine(46)-N7)-methyltransferase activity"/>
    <property type="evidence" value="ECO:0007669"/>
    <property type="project" value="UniProtKB-UniRule"/>
</dbReference>
<dbReference type="CDD" id="cd02440">
    <property type="entry name" value="AdoMet_MTases"/>
    <property type="match status" value="1"/>
</dbReference>
<dbReference type="Gene3D" id="3.40.50.150">
    <property type="entry name" value="Vaccinia Virus protein VP39"/>
    <property type="match status" value="1"/>
</dbReference>
<dbReference type="HAMAP" id="MF_01057">
    <property type="entry name" value="tRNA_methyltr_TrmB"/>
    <property type="match status" value="1"/>
</dbReference>
<dbReference type="InterPro" id="IPR029063">
    <property type="entry name" value="SAM-dependent_MTases_sf"/>
</dbReference>
<dbReference type="InterPro" id="IPR003358">
    <property type="entry name" value="tRNA_(Gua-N-7)_MeTrfase_Trmb"/>
</dbReference>
<dbReference type="InterPro" id="IPR055361">
    <property type="entry name" value="tRNA_methyltr_TrmB_bact"/>
</dbReference>
<dbReference type="PANTHER" id="PTHR23417">
    <property type="entry name" value="3-DEOXY-D-MANNO-OCTULOSONIC-ACID TRANSFERASE/TRNA GUANINE-N 7 - -METHYLTRANSFERASE"/>
    <property type="match status" value="1"/>
</dbReference>
<dbReference type="PANTHER" id="PTHR23417:SF14">
    <property type="entry name" value="PENTACOTRIPEPTIDE-REPEAT REGION OF PRORP DOMAIN-CONTAINING PROTEIN"/>
    <property type="match status" value="1"/>
</dbReference>
<dbReference type="Pfam" id="PF02390">
    <property type="entry name" value="Methyltransf_4"/>
    <property type="match status" value="1"/>
</dbReference>
<dbReference type="SUPFAM" id="SSF53335">
    <property type="entry name" value="S-adenosyl-L-methionine-dependent methyltransferases"/>
    <property type="match status" value="1"/>
</dbReference>
<dbReference type="PROSITE" id="PS51625">
    <property type="entry name" value="SAM_MT_TRMB"/>
    <property type="match status" value="1"/>
</dbReference>
<name>TRMB_PARDP</name>
<protein>
    <recommendedName>
        <fullName evidence="2">tRNA (guanine-N(7)-)-methyltransferase</fullName>
        <ecNumber evidence="2">2.1.1.33</ecNumber>
    </recommendedName>
    <alternativeName>
        <fullName evidence="2">tRNA (guanine(46)-N(7))-methyltransferase</fullName>
    </alternativeName>
    <alternativeName>
        <fullName evidence="2">tRNA(m7G46)-methyltransferase</fullName>
    </alternativeName>
</protein>